<gene>
    <name evidence="1" type="primary">METTL9</name>
</gene>
<evidence type="ECO:0000250" key="1">
    <source>
        <dbReference type="UniProtKB" id="Q9H1A3"/>
    </source>
</evidence>
<evidence type="ECO:0000255" key="2"/>
<evidence type="ECO:0000305" key="3"/>
<sequence>MRLLAGWLCLSLASVWLARRMWTLRSPLTRSLYVNMTSGPGGPAAAAGGRKENHQWYVCNREKLCESLQAVFVQSYLDQGTQIFLNNSIEKSGWLFIQLYHSFVSSVFSLFMSRTSINGLLGRGSMFVFSPDQFQRLLKINPDWKTHRLLDLGAGDGEVTKIMSPHFEEIYATELSETMIWQLQKKKYRVLGINEWQKTGFQYDVISCLNLLDRCDQPLTLLKDIRSVLEPTRGRVILALVLPFHPYVENVGGKWDKPSEILEIKGQNWEEQVNSLPEVFRKAGFVIEAFTRLPYLCEGDMYNDYYVLDDAVFVLKPV</sequence>
<reference key="1">
    <citation type="submission" date="2006-08" db="EMBL/GenBank/DDBJ databases">
        <authorList>
            <consortium name="NIH - Mammalian Gene Collection (MGC) project"/>
        </authorList>
    </citation>
    <scope>NUCLEOTIDE SEQUENCE [LARGE SCALE MRNA]</scope>
    <source>
        <strain>Hereford</strain>
        <tissue>Fetal pons</tissue>
    </source>
</reference>
<organism>
    <name type="scientific">Bos taurus</name>
    <name type="common">Bovine</name>
    <dbReference type="NCBI Taxonomy" id="9913"/>
    <lineage>
        <taxon>Eukaryota</taxon>
        <taxon>Metazoa</taxon>
        <taxon>Chordata</taxon>
        <taxon>Craniata</taxon>
        <taxon>Vertebrata</taxon>
        <taxon>Euteleostomi</taxon>
        <taxon>Mammalia</taxon>
        <taxon>Eutheria</taxon>
        <taxon>Laurasiatheria</taxon>
        <taxon>Artiodactyla</taxon>
        <taxon>Ruminantia</taxon>
        <taxon>Pecora</taxon>
        <taxon>Bovidae</taxon>
        <taxon>Bovinae</taxon>
        <taxon>Bos</taxon>
    </lineage>
</organism>
<proteinExistence type="evidence at transcript level"/>
<keyword id="KW-0256">Endoplasmic reticulum</keyword>
<keyword id="KW-0325">Glycoprotein</keyword>
<keyword id="KW-0489">Methyltransferase</keyword>
<keyword id="KW-0496">Mitochondrion</keyword>
<keyword id="KW-1185">Reference proteome</keyword>
<keyword id="KW-0732">Signal</keyword>
<keyword id="KW-0808">Transferase</keyword>
<protein>
    <recommendedName>
        <fullName evidence="3">Protein-L-histidine N-pros-methyltransferase</fullName>
        <ecNumber evidence="1">2.1.1.-</ecNumber>
    </recommendedName>
    <alternativeName>
        <fullName evidence="1">Methyltransferase-like protein 9</fullName>
    </alternativeName>
</protein>
<accession>Q0VCJ8</accession>
<dbReference type="EC" id="2.1.1.-" evidence="1"/>
<dbReference type="EMBL" id="BC120133">
    <property type="protein sequence ID" value="AAI20134.1"/>
    <property type="molecule type" value="mRNA"/>
</dbReference>
<dbReference type="RefSeq" id="NP_001073836.1">
    <property type="nucleotide sequence ID" value="NM_001080367.2"/>
</dbReference>
<dbReference type="SMR" id="Q0VCJ8"/>
<dbReference type="FunCoup" id="Q0VCJ8">
    <property type="interactions" value="2455"/>
</dbReference>
<dbReference type="STRING" id="9913.ENSBTAP00000025118"/>
<dbReference type="GlyCosmos" id="Q0VCJ8">
    <property type="glycosylation" value="1 site, No reported glycans"/>
</dbReference>
<dbReference type="GlyGen" id="Q0VCJ8">
    <property type="glycosylation" value="1 site"/>
</dbReference>
<dbReference type="PaxDb" id="9913-ENSBTAP00000025118"/>
<dbReference type="GeneID" id="787067"/>
<dbReference type="KEGG" id="bta:787067"/>
<dbReference type="CTD" id="51108"/>
<dbReference type="VEuPathDB" id="HostDB:ENSBTAG00000018868"/>
<dbReference type="eggNOG" id="KOG3987">
    <property type="taxonomic scope" value="Eukaryota"/>
</dbReference>
<dbReference type="HOGENOM" id="CLU_056100_0_0_1"/>
<dbReference type="InParanoid" id="Q0VCJ8"/>
<dbReference type="OMA" id="VEIGGKW"/>
<dbReference type="OrthoDB" id="199041at2759"/>
<dbReference type="TreeFam" id="TF314187"/>
<dbReference type="Proteomes" id="UP000009136">
    <property type="component" value="Chromosome 25"/>
</dbReference>
<dbReference type="Bgee" id="ENSBTAG00000018868">
    <property type="expression patterns" value="Expressed in oviduct epithelium and 106 other cell types or tissues"/>
</dbReference>
<dbReference type="GO" id="GO:0005783">
    <property type="term" value="C:endoplasmic reticulum"/>
    <property type="evidence" value="ECO:0000250"/>
    <property type="project" value="UniProtKB"/>
</dbReference>
<dbReference type="GO" id="GO:0005739">
    <property type="term" value="C:mitochondrion"/>
    <property type="evidence" value="ECO:0007669"/>
    <property type="project" value="UniProtKB-SubCell"/>
</dbReference>
<dbReference type="GO" id="GO:0106370">
    <property type="term" value="F:protein-L-histidine N-pros-methyltransferase activity"/>
    <property type="evidence" value="ECO:0000250"/>
    <property type="project" value="UniProtKB"/>
</dbReference>
<dbReference type="GO" id="GO:0032259">
    <property type="term" value="P:methylation"/>
    <property type="evidence" value="ECO:0007669"/>
    <property type="project" value="UniProtKB-KW"/>
</dbReference>
<dbReference type="CDD" id="cd02440">
    <property type="entry name" value="AdoMet_MTases"/>
    <property type="match status" value="1"/>
</dbReference>
<dbReference type="Gene3D" id="3.40.50.150">
    <property type="entry name" value="Vaccinia Virus protein VP39"/>
    <property type="match status" value="1"/>
</dbReference>
<dbReference type="InterPro" id="IPR007884">
    <property type="entry name" value="METL9"/>
</dbReference>
<dbReference type="InterPro" id="IPR029063">
    <property type="entry name" value="SAM-dependent_MTases_sf"/>
</dbReference>
<dbReference type="PANTHER" id="PTHR12890">
    <property type="entry name" value="DREV PROTEIN"/>
    <property type="match status" value="1"/>
</dbReference>
<dbReference type="PANTHER" id="PTHR12890:SF0">
    <property type="entry name" value="PROTEIN-L-HISTIDINE N-PROS-METHYLTRANSFERASE"/>
    <property type="match status" value="1"/>
</dbReference>
<dbReference type="Pfam" id="PF05219">
    <property type="entry name" value="DREV"/>
    <property type="match status" value="1"/>
</dbReference>
<dbReference type="SUPFAM" id="SSF53335">
    <property type="entry name" value="S-adenosyl-L-methionine-dependent methyltransferases"/>
    <property type="match status" value="1"/>
</dbReference>
<name>METL9_BOVIN</name>
<feature type="signal peptide" evidence="2">
    <location>
        <begin position="1"/>
        <end position="18"/>
    </location>
</feature>
<feature type="chain" id="PRO_0000317489" description="Protein-L-histidine N-pros-methyltransferase">
    <location>
        <begin position="19"/>
        <end position="318"/>
    </location>
</feature>
<feature type="binding site" evidence="1">
    <location>
        <position position="174"/>
    </location>
    <ligand>
        <name>S-adenosyl-L-homocysteine</name>
        <dbReference type="ChEBI" id="CHEBI:57856"/>
    </ligand>
</feature>
<feature type="binding site" evidence="1">
    <location>
        <position position="210"/>
    </location>
    <ligand>
        <name>S-adenosyl-L-homocysteine</name>
        <dbReference type="ChEBI" id="CHEBI:57856"/>
    </ligand>
</feature>
<feature type="binding site" evidence="1">
    <location>
        <position position="295"/>
    </location>
    <ligand>
        <name>S-adenosyl-L-homocysteine</name>
        <dbReference type="ChEBI" id="CHEBI:57856"/>
    </ligand>
</feature>
<feature type="glycosylation site" description="N-linked (GlcNAc...) asparagine" evidence="2">
    <location>
        <position position="35"/>
    </location>
</feature>
<comment type="function">
    <text evidence="1">Protein-histidine N-methyltransferase that specifically catalyzes 1-methylhistidine (pros-methylhistidine) methylation of target proteins. Specifically methylates the second His of proteins with a His-x-His (HxH) motif (where 'x' is preferably a small amino acid), while exploiting the first one as a recognition signature. Catalyzes methylation of target proteins such as S100A9, NDUFB3, SLC39A5, SLC39A7, ARMC6 and DNAJB12; 1-methylhistidine modification may affect the binding of zinc and other metals to its target proteins. Constitutes the main methyltransferase for the 1-methylhistidine modification in cell.</text>
</comment>
<comment type="catalytic activity">
    <reaction evidence="1">
        <text>L-histidyl-[protein] + S-adenosyl-L-methionine = N(pros)-methyl-L-histidyl-[protein] + S-adenosyl-L-homocysteine + H(+)</text>
        <dbReference type="Rhea" id="RHEA:67076"/>
        <dbReference type="Rhea" id="RHEA-COMP:9745"/>
        <dbReference type="Rhea" id="RHEA-COMP:17184"/>
        <dbReference type="ChEBI" id="CHEBI:15378"/>
        <dbReference type="ChEBI" id="CHEBI:29979"/>
        <dbReference type="ChEBI" id="CHEBI:43903"/>
        <dbReference type="ChEBI" id="CHEBI:57856"/>
        <dbReference type="ChEBI" id="CHEBI:59789"/>
    </reaction>
    <physiologicalReaction direction="left-to-right" evidence="1">
        <dbReference type="Rhea" id="RHEA:67077"/>
    </physiologicalReaction>
</comment>
<comment type="subcellular location">
    <subcellularLocation>
        <location evidence="1">Endoplasmic reticulum</location>
    </subcellularLocation>
    <subcellularLocation>
        <location evidence="1">Mitochondrion</location>
    </subcellularLocation>
    <text evidence="1">Colocalizes with membranous compartments such as the endoplasmic reticulum and mitochondria.</text>
</comment>
<comment type="similarity">
    <text evidence="3">Belongs to the METTL9 family.</text>
</comment>